<comment type="similarity">
    <text evidence="1">Belongs to the bacterial ribosomal protein bS21 family.</text>
</comment>
<reference key="1">
    <citation type="journal article" date="2010" name="PLoS ONE">
        <title>The complete genome sequence of Cupriavidus metallidurans strain CH34, a master survivalist in harsh and anthropogenic environments.</title>
        <authorList>
            <person name="Janssen P.J."/>
            <person name="Van Houdt R."/>
            <person name="Moors H."/>
            <person name="Monsieurs P."/>
            <person name="Morin N."/>
            <person name="Michaux A."/>
            <person name="Benotmane M.A."/>
            <person name="Leys N."/>
            <person name="Vallaeys T."/>
            <person name="Lapidus A."/>
            <person name="Monchy S."/>
            <person name="Medigue C."/>
            <person name="Taghavi S."/>
            <person name="McCorkle S."/>
            <person name="Dunn J."/>
            <person name="van der Lelie D."/>
            <person name="Mergeay M."/>
        </authorList>
    </citation>
    <scope>NUCLEOTIDE SEQUENCE [LARGE SCALE GENOMIC DNA]</scope>
    <source>
        <strain>ATCC 43123 / DSM 2839 / NBRC 102507 / CH34</strain>
    </source>
</reference>
<name>RS212_CUPMC</name>
<keyword id="KW-1185">Reference proteome</keyword>
<keyword id="KW-0687">Ribonucleoprotein</keyword>
<keyword id="KW-0689">Ribosomal protein</keyword>
<sequence>MTTIRLKENEPFEVALRRFKRTIEKNGLLPELRAREFYEKPTAERKRKRDAAVKRNYKRLRSQMLPKKLY</sequence>
<evidence type="ECO:0000255" key="1">
    <source>
        <dbReference type="HAMAP-Rule" id="MF_00358"/>
    </source>
</evidence>
<evidence type="ECO:0000305" key="2"/>
<accession>Q1LK40</accession>
<organism>
    <name type="scientific">Cupriavidus metallidurans (strain ATCC 43123 / DSM 2839 / NBRC 102507 / CH34)</name>
    <name type="common">Ralstonia metallidurans</name>
    <dbReference type="NCBI Taxonomy" id="266264"/>
    <lineage>
        <taxon>Bacteria</taxon>
        <taxon>Pseudomonadati</taxon>
        <taxon>Pseudomonadota</taxon>
        <taxon>Betaproteobacteria</taxon>
        <taxon>Burkholderiales</taxon>
        <taxon>Burkholderiaceae</taxon>
        <taxon>Cupriavidus</taxon>
    </lineage>
</organism>
<protein>
    <recommendedName>
        <fullName evidence="1">Small ribosomal subunit protein bS21B</fullName>
    </recommendedName>
    <alternativeName>
        <fullName evidence="2">30S ribosomal protein S21 2</fullName>
    </alternativeName>
</protein>
<gene>
    <name evidence="1" type="primary">rpsU2</name>
    <name type="ordered locus">Rmet_2609</name>
</gene>
<dbReference type="EMBL" id="CP000352">
    <property type="protein sequence ID" value="ABF09486.1"/>
    <property type="molecule type" value="Genomic_DNA"/>
</dbReference>
<dbReference type="SMR" id="Q1LK40"/>
<dbReference type="STRING" id="266264.Rmet_2609"/>
<dbReference type="KEGG" id="rme:Rmet_2609"/>
<dbReference type="eggNOG" id="COG0828">
    <property type="taxonomic scope" value="Bacteria"/>
</dbReference>
<dbReference type="HOGENOM" id="CLU_159258_1_2_4"/>
<dbReference type="Proteomes" id="UP000002429">
    <property type="component" value="Chromosome"/>
</dbReference>
<dbReference type="GO" id="GO:1990904">
    <property type="term" value="C:ribonucleoprotein complex"/>
    <property type="evidence" value="ECO:0007669"/>
    <property type="project" value="UniProtKB-KW"/>
</dbReference>
<dbReference type="GO" id="GO:0005840">
    <property type="term" value="C:ribosome"/>
    <property type="evidence" value="ECO:0007669"/>
    <property type="project" value="UniProtKB-KW"/>
</dbReference>
<dbReference type="GO" id="GO:0003735">
    <property type="term" value="F:structural constituent of ribosome"/>
    <property type="evidence" value="ECO:0007669"/>
    <property type="project" value="InterPro"/>
</dbReference>
<dbReference type="GO" id="GO:0006412">
    <property type="term" value="P:translation"/>
    <property type="evidence" value="ECO:0007669"/>
    <property type="project" value="UniProtKB-UniRule"/>
</dbReference>
<dbReference type="Gene3D" id="1.20.5.1150">
    <property type="entry name" value="Ribosomal protein S8"/>
    <property type="match status" value="1"/>
</dbReference>
<dbReference type="HAMAP" id="MF_00358">
    <property type="entry name" value="Ribosomal_bS21"/>
    <property type="match status" value="1"/>
</dbReference>
<dbReference type="InterPro" id="IPR001911">
    <property type="entry name" value="Ribosomal_bS21"/>
</dbReference>
<dbReference type="InterPro" id="IPR018278">
    <property type="entry name" value="Ribosomal_bS21_CS"/>
</dbReference>
<dbReference type="InterPro" id="IPR038380">
    <property type="entry name" value="Ribosomal_bS21_sf"/>
</dbReference>
<dbReference type="NCBIfam" id="TIGR00030">
    <property type="entry name" value="S21p"/>
    <property type="match status" value="1"/>
</dbReference>
<dbReference type="PANTHER" id="PTHR21109">
    <property type="entry name" value="MITOCHONDRIAL 28S RIBOSOMAL PROTEIN S21"/>
    <property type="match status" value="1"/>
</dbReference>
<dbReference type="PANTHER" id="PTHR21109:SF22">
    <property type="entry name" value="SMALL RIBOSOMAL SUBUNIT PROTEIN BS21"/>
    <property type="match status" value="1"/>
</dbReference>
<dbReference type="Pfam" id="PF01165">
    <property type="entry name" value="Ribosomal_S21"/>
    <property type="match status" value="1"/>
</dbReference>
<dbReference type="PRINTS" id="PR00976">
    <property type="entry name" value="RIBOSOMALS21"/>
</dbReference>
<dbReference type="PROSITE" id="PS01181">
    <property type="entry name" value="RIBOSOMAL_S21"/>
    <property type="match status" value="1"/>
</dbReference>
<proteinExistence type="inferred from homology"/>
<feature type="chain" id="PRO_0000266743" description="Small ribosomal subunit protein bS21B">
    <location>
        <begin position="1"/>
        <end position="70"/>
    </location>
</feature>